<proteinExistence type="inferred from homology"/>
<feature type="chain" id="PRO_0000249661" description="N-acetylmuramic acid 6-phosphate etherase">
    <location>
        <begin position="1"/>
        <end position="299"/>
    </location>
</feature>
<feature type="domain" description="SIS" evidence="1">
    <location>
        <begin position="54"/>
        <end position="217"/>
    </location>
</feature>
<feature type="active site" description="Proton donor" evidence="1">
    <location>
        <position position="82"/>
    </location>
</feature>
<feature type="active site" evidence="1">
    <location>
        <position position="113"/>
    </location>
</feature>
<protein>
    <recommendedName>
        <fullName evidence="1">N-acetylmuramic acid 6-phosphate etherase</fullName>
        <shortName evidence="1">MurNAc-6-P etherase</shortName>
        <ecNumber evidence="1">4.2.1.126</ecNumber>
    </recommendedName>
    <alternativeName>
        <fullName evidence="1">N-acetylmuramic acid 6-phosphate hydrolase</fullName>
    </alternativeName>
    <alternativeName>
        <fullName evidence="1">N-acetylmuramic acid 6-phosphate lyase</fullName>
    </alternativeName>
</protein>
<organism>
    <name type="scientific">Staphylococcus aureus (strain USA300)</name>
    <dbReference type="NCBI Taxonomy" id="367830"/>
    <lineage>
        <taxon>Bacteria</taxon>
        <taxon>Bacillati</taxon>
        <taxon>Bacillota</taxon>
        <taxon>Bacilli</taxon>
        <taxon>Bacillales</taxon>
        <taxon>Staphylococcaceae</taxon>
        <taxon>Staphylococcus</taxon>
    </lineage>
</organism>
<dbReference type="EC" id="4.2.1.126" evidence="1"/>
<dbReference type="EMBL" id="CP000255">
    <property type="protein sequence ID" value="ABD22914.1"/>
    <property type="status" value="ALT_INIT"/>
    <property type="molecule type" value="Genomic_DNA"/>
</dbReference>
<dbReference type="SMR" id="Q2FK71"/>
<dbReference type="KEGG" id="saa:SAUSA300_0193"/>
<dbReference type="HOGENOM" id="CLU_049049_1_1_9"/>
<dbReference type="UniPathway" id="UPA00342"/>
<dbReference type="PHI-base" id="PHI:7350"/>
<dbReference type="Proteomes" id="UP000001939">
    <property type="component" value="Chromosome"/>
</dbReference>
<dbReference type="GO" id="GO:0097367">
    <property type="term" value="F:carbohydrate derivative binding"/>
    <property type="evidence" value="ECO:0007669"/>
    <property type="project" value="InterPro"/>
</dbReference>
<dbReference type="GO" id="GO:0016835">
    <property type="term" value="F:carbon-oxygen lyase activity"/>
    <property type="evidence" value="ECO:0007669"/>
    <property type="project" value="UniProtKB-UniRule"/>
</dbReference>
<dbReference type="GO" id="GO:0016803">
    <property type="term" value="F:ether hydrolase activity"/>
    <property type="evidence" value="ECO:0007669"/>
    <property type="project" value="TreeGrafter"/>
</dbReference>
<dbReference type="GO" id="GO:0046348">
    <property type="term" value="P:amino sugar catabolic process"/>
    <property type="evidence" value="ECO:0007669"/>
    <property type="project" value="InterPro"/>
</dbReference>
<dbReference type="GO" id="GO:0097173">
    <property type="term" value="P:N-acetylmuramic acid catabolic process"/>
    <property type="evidence" value="ECO:0007669"/>
    <property type="project" value="UniProtKB-UniPathway"/>
</dbReference>
<dbReference type="GO" id="GO:0009254">
    <property type="term" value="P:peptidoglycan turnover"/>
    <property type="evidence" value="ECO:0007669"/>
    <property type="project" value="TreeGrafter"/>
</dbReference>
<dbReference type="CDD" id="cd05007">
    <property type="entry name" value="SIS_Etherase"/>
    <property type="match status" value="1"/>
</dbReference>
<dbReference type="FunFam" id="1.10.8.1080:FF:000001">
    <property type="entry name" value="N-acetylmuramic acid 6-phosphate etherase"/>
    <property type="match status" value="1"/>
</dbReference>
<dbReference type="FunFam" id="3.40.50.10490:FF:000014">
    <property type="entry name" value="N-acetylmuramic acid 6-phosphate etherase"/>
    <property type="match status" value="1"/>
</dbReference>
<dbReference type="Gene3D" id="1.10.8.1080">
    <property type="match status" value="1"/>
</dbReference>
<dbReference type="Gene3D" id="3.40.50.10490">
    <property type="entry name" value="Glucose-6-phosphate isomerase like protein, domain 1"/>
    <property type="match status" value="1"/>
</dbReference>
<dbReference type="HAMAP" id="MF_00068">
    <property type="entry name" value="MurQ"/>
    <property type="match status" value="1"/>
</dbReference>
<dbReference type="InterPro" id="IPR005488">
    <property type="entry name" value="Etherase_MurQ"/>
</dbReference>
<dbReference type="InterPro" id="IPR005486">
    <property type="entry name" value="Glucokinase_regulatory_CS"/>
</dbReference>
<dbReference type="InterPro" id="IPR040190">
    <property type="entry name" value="MURQ/GCKR"/>
</dbReference>
<dbReference type="InterPro" id="IPR000408">
    <property type="entry name" value="Reg_chr_condens"/>
</dbReference>
<dbReference type="InterPro" id="IPR001347">
    <property type="entry name" value="SIS_dom"/>
</dbReference>
<dbReference type="InterPro" id="IPR046348">
    <property type="entry name" value="SIS_dom_sf"/>
</dbReference>
<dbReference type="NCBIfam" id="TIGR00274">
    <property type="entry name" value="N-acetylmuramic acid 6-phosphate etherase"/>
    <property type="match status" value="1"/>
</dbReference>
<dbReference type="NCBIfam" id="NF003915">
    <property type="entry name" value="PRK05441.1"/>
    <property type="match status" value="1"/>
</dbReference>
<dbReference type="NCBIfam" id="NF009222">
    <property type="entry name" value="PRK12570.1"/>
    <property type="match status" value="1"/>
</dbReference>
<dbReference type="PANTHER" id="PTHR10088">
    <property type="entry name" value="GLUCOKINASE REGULATORY PROTEIN"/>
    <property type="match status" value="1"/>
</dbReference>
<dbReference type="PANTHER" id="PTHR10088:SF4">
    <property type="entry name" value="GLUCOKINASE REGULATORY PROTEIN"/>
    <property type="match status" value="1"/>
</dbReference>
<dbReference type="Pfam" id="PF22645">
    <property type="entry name" value="GKRP_SIS_N"/>
    <property type="match status" value="1"/>
</dbReference>
<dbReference type="SUPFAM" id="SSF53697">
    <property type="entry name" value="SIS domain"/>
    <property type="match status" value="1"/>
</dbReference>
<dbReference type="PROSITE" id="PS01272">
    <property type="entry name" value="GCKR"/>
    <property type="match status" value="1"/>
</dbReference>
<dbReference type="PROSITE" id="PS51464">
    <property type="entry name" value="SIS"/>
    <property type="match status" value="1"/>
</dbReference>
<accession>Q2FK71</accession>
<comment type="function">
    <text evidence="1">Specifically catalyzes the cleavage of the D-lactyl ether substituent of MurNAc 6-phosphate, producing GlcNAc 6-phosphate and D-lactate.</text>
</comment>
<comment type="catalytic activity">
    <reaction evidence="1">
        <text>N-acetyl-D-muramate 6-phosphate + H2O = N-acetyl-D-glucosamine 6-phosphate + (R)-lactate</text>
        <dbReference type="Rhea" id="RHEA:26410"/>
        <dbReference type="ChEBI" id="CHEBI:15377"/>
        <dbReference type="ChEBI" id="CHEBI:16004"/>
        <dbReference type="ChEBI" id="CHEBI:57513"/>
        <dbReference type="ChEBI" id="CHEBI:58722"/>
        <dbReference type="EC" id="4.2.1.126"/>
    </reaction>
</comment>
<comment type="pathway">
    <text evidence="1">Amino-sugar metabolism; N-acetylmuramate degradation.</text>
</comment>
<comment type="subunit">
    <text evidence="1">Homodimer.</text>
</comment>
<comment type="miscellaneous">
    <text evidence="1">A lyase-type mechanism (elimination/hydration) is suggested for the cleavage of the lactyl ether bond of MurNAc 6-phosphate, with the formation of an alpha,beta-unsaturated aldehyde intermediate with (E)-stereochemistry, followed by the syn addition of water to give product.</text>
</comment>
<comment type="similarity">
    <text evidence="1">Belongs to the GCKR-like family. MurNAc-6-P etherase subfamily.</text>
</comment>
<comment type="sequence caution" evidence="2">
    <conflict type="erroneous initiation">
        <sequence resource="EMBL-CDS" id="ABD22914"/>
    </conflict>
</comment>
<sequence>MMENSTTEARNEATMHLDEMTVEEALITMNKEDQQVPLAVRKAIPQLTKVIKKTIAQYKKGGRLIYIGAGTSGRLGVLDAAECVPTFNTDPHEIIGIIAGGQHAMTMAVEGAEDHKKLAEEDLKNIDLTSKDVVIGIAASGKTPYVIGGLTFANTIGATTVSISCNEHAVISEIAQYPVEVKVGPEVLTGSTRLKSGTAQKLILNMISTITMVGVGKVYDNLMIDVKATNQKLIDRSVRIIQEICAITYDEAMALYQVSEHDVKVATVMGMCGISKEEATRRLLNNGDIVKRAIRDRQP</sequence>
<evidence type="ECO:0000255" key="1">
    <source>
        <dbReference type="HAMAP-Rule" id="MF_00068"/>
    </source>
</evidence>
<evidence type="ECO:0000305" key="2"/>
<name>MURQ_STAA3</name>
<reference key="1">
    <citation type="journal article" date="2006" name="Lancet">
        <title>Complete genome sequence of USA300, an epidemic clone of community-acquired meticillin-resistant Staphylococcus aureus.</title>
        <authorList>
            <person name="Diep B.A."/>
            <person name="Gill S.R."/>
            <person name="Chang R.F."/>
            <person name="Phan T.H."/>
            <person name="Chen J.H."/>
            <person name="Davidson M.G."/>
            <person name="Lin F."/>
            <person name="Lin J."/>
            <person name="Carleton H.A."/>
            <person name="Mongodin E.F."/>
            <person name="Sensabaugh G.F."/>
            <person name="Perdreau-Remington F."/>
        </authorList>
    </citation>
    <scope>NUCLEOTIDE SEQUENCE [LARGE SCALE GENOMIC DNA]</scope>
    <source>
        <strain>USA300</strain>
    </source>
</reference>
<keyword id="KW-0119">Carbohydrate metabolism</keyword>
<keyword id="KW-0456">Lyase</keyword>
<gene>
    <name evidence="1" type="primary">murQ</name>
    <name type="ordered locus">SAUSA300_0193</name>
</gene>